<sequence>MGRSRGNFQNFEDPTQRTRKKKNAANVENFESTSLVPGAEGGGKYNCDYCQKDITGKIRIKCAVCPDFDLCIECMSVGAEITPHKCDHPYRVMGNLTFPLICPDWSADDEMLLLEGLEIYGLGNWAEVAEHVGTKSKEQCLEHYRNIYLNSPFFPLPDMSHVAGKNRKELQAMAKGRIDDKKAEQNMKEEYPFSPPKVKVEDTQKESFVDRSFGGKKPVSTSVNNSLVELSNYNQKREEFDPEYDNDAEQLLAEMEFKENDTPEEHELKLRVLRIYSKRLDERKRRKEFIIERNLLYPNPFEKDLSQEEKVQCRRLDVFMRFHSKEEHDELLRNVVSEYRMVKRLKDLKEAQVAGCRSTAEAERYLGRKRKRENEEGMNRGKESGQFGQIAGEMGSRPPVQASSSYVNDLDLIGFTESQLLSESEKRLCSEVKLVPPVYLQMQQVMSHEIFKGNVTKKSDAYSLFKIDPTKVDRVYDMLVKKGIAQL</sequence>
<organism>
    <name type="scientific">Arabidopsis thaliana</name>
    <name type="common">Mouse-ear cress</name>
    <dbReference type="NCBI Taxonomy" id="3702"/>
    <lineage>
        <taxon>Eukaryota</taxon>
        <taxon>Viridiplantae</taxon>
        <taxon>Streptophyta</taxon>
        <taxon>Embryophyta</taxon>
        <taxon>Tracheophyta</taxon>
        <taxon>Spermatophyta</taxon>
        <taxon>Magnoliopsida</taxon>
        <taxon>eudicotyledons</taxon>
        <taxon>Gunneridae</taxon>
        <taxon>Pentapetalae</taxon>
        <taxon>rosids</taxon>
        <taxon>malvids</taxon>
        <taxon>Brassicales</taxon>
        <taxon>Brassicaceae</taxon>
        <taxon>Camelineae</taxon>
        <taxon>Arabidopsis</taxon>
    </lineage>
</organism>
<gene>
    <name type="primary">ADA2B</name>
    <name type="synonym">PRZ1</name>
    <name type="ordered locus">At4g16420</name>
    <name type="ORF">dl4235c</name>
</gene>
<dbReference type="EMBL" id="AF338770">
    <property type="protein sequence ID" value="AAK31320.1"/>
    <property type="molecule type" value="mRNA"/>
</dbReference>
<dbReference type="EMBL" id="Z97341">
    <property type="protein sequence ID" value="CAB10418.1"/>
    <property type="status" value="ALT_SEQ"/>
    <property type="molecule type" value="Genomic_DNA"/>
</dbReference>
<dbReference type="EMBL" id="AL161544">
    <property type="protein sequence ID" value="CAB78684.1"/>
    <property type="status" value="ALT_SEQ"/>
    <property type="molecule type" value="Genomic_DNA"/>
</dbReference>
<dbReference type="EMBL" id="CP002687">
    <property type="protein sequence ID" value="AEE83744.1"/>
    <property type="molecule type" value="Genomic_DNA"/>
</dbReference>
<dbReference type="EMBL" id="CP002687">
    <property type="protein sequence ID" value="AEE83745.1"/>
    <property type="molecule type" value="Genomic_DNA"/>
</dbReference>
<dbReference type="EMBL" id="CP002687">
    <property type="protein sequence ID" value="AEE83746.1"/>
    <property type="molecule type" value="Genomic_DNA"/>
</dbReference>
<dbReference type="EMBL" id="AY143911">
    <property type="protein sequence ID" value="AAN28850.1"/>
    <property type="molecule type" value="mRNA"/>
</dbReference>
<dbReference type="EMBL" id="AY050348">
    <property type="protein sequence ID" value="AAK91365.1"/>
    <property type="molecule type" value="mRNA"/>
</dbReference>
<dbReference type="EMBL" id="BX827435">
    <property type="status" value="NOT_ANNOTATED_CDS"/>
    <property type="molecule type" value="mRNA"/>
</dbReference>
<dbReference type="EMBL" id="BX827480">
    <property type="status" value="NOT_ANNOTATED_CDS"/>
    <property type="molecule type" value="mRNA"/>
</dbReference>
<dbReference type="PIR" id="H71430">
    <property type="entry name" value="H71430"/>
</dbReference>
<dbReference type="RefSeq" id="NP_567495.1">
    <molecule id="Q9ATB4-1"/>
    <property type="nucleotide sequence ID" value="NM_117737.5"/>
</dbReference>
<dbReference type="RefSeq" id="NP_974560.1">
    <molecule id="Q9ATB4-2"/>
    <property type="nucleotide sequence ID" value="NM_202831.3"/>
</dbReference>
<dbReference type="RefSeq" id="NP_974561.1">
    <molecule id="Q9ATB4-3"/>
    <property type="nucleotide sequence ID" value="NM_202832.2"/>
</dbReference>
<dbReference type="SMR" id="Q9ATB4"/>
<dbReference type="BioGRID" id="12629">
    <property type="interactions" value="12"/>
</dbReference>
<dbReference type="FunCoup" id="Q9ATB4">
    <property type="interactions" value="4555"/>
</dbReference>
<dbReference type="IntAct" id="Q9ATB4">
    <property type="interactions" value="7"/>
</dbReference>
<dbReference type="STRING" id="3702.Q9ATB4"/>
<dbReference type="iPTMnet" id="Q9ATB4"/>
<dbReference type="PaxDb" id="3702-AT4G16420.1"/>
<dbReference type="ProteomicsDB" id="233000">
    <molecule id="Q9ATB4-1"/>
</dbReference>
<dbReference type="EnsemblPlants" id="AT4G16420.1">
    <molecule id="Q9ATB4-1"/>
    <property type="protein sequence ID" value="AT4G16420.1"/>
    <property type="gene ID" value="AT4G16420"/>
</dbReference>
<dbReference type="EnsemblPlants" id="AT4G16420.2">
    <molecule id="Q9ATB4-2"/>
    <property type="protein sequence ID" value="AT4G16420.2"/>
    <property type="gene ID" value="AT4G16420"/>
</dbReference>
<dbReference type="EnsemblPlants" id="AT4G16420.3">
    <molecule id="Q9ATB4-3"/>
    <property type="protein sequence ID" value="AT4G16420.3"/>
    <property type="gene ID" value="AT4G16420"/>
</dbReference>
<dbReference type="GeneID" id="827336"/>
<dbReference type="Gramene" id="AT4G16420.1">
    <molecule id="Q9ATB4-1"/>
    <property type="protein sequence ID" value="AT4G16420.1"/>
    <property type="gene ID" value="AT4G16420"/>
</dbReference>
<dbReference type="Gramene" id="AT4G16420.2">
    <molecule id="Q9ATB4-2"/>
    <property type="protein sequence ID" value="AT4G16420.2"/>
    <property type="gene ID" value="AT4G16420"/>
</dbReference>
<dbReference type="Gramene" id="AT4G16420.3">
    <molecule id="Q9ATB4-3"/>
    <property type="protein sequence ID" value="AT4G16420.3"/>
    <property type="gene ID" value="AT4G16420"/>
</dbReference>
<dbReference type="KEGG" id="ath:AT4G16420"/>
<dbReference type="Araport" id="AT4G16420"/>
<dbReference type="TAIR" id="AT4G16420">
    <property type="gene designation" value="ADA2B"/>
</dbReference>
<dbReference type="eggNOG" id="KOG0457">
    <property type="taxonomic scope" value="Eukaryota"/>
</dbReference>
<dbReference type="InParanoid" id="Q9ATB4"/>
<dbReference type="OMA" id="YNGNHRP"/>
<dbReference type="OrthoDB" id="270417at2759"/>
<dbReference type="PhylomeDB" id="Q9ATB4"/>
<dbReference type="PRO" id="PR:Q9ATB4"/>
<dbReference type="Proteomes" id="UP000006548">
    <property type="component" value="Chromosome 4"/>
</dbReference>
<dbReference type="ExpressionAtlas" id="Q9ATB4">
    <property type="expression patterns" value="baseline and differential"/>
</dbReference>
<dbReference type="GO" id="GO:0005634">
    <property type="term" value="C:nucleus"/>
    <property type="evidence" value="ECO:0000314"/>
    <property type="project" value="TAIR"/>
</dbReference>
<dbReference type="GO" id="GO:0003677">
    <property type="term" value="F:DNA binding"/>
    <property type="evidence" value="ECO:0007669"/>
    <property type="project" value="UniProtKB-KW"/>
</dbReference>
<dbReference type="GO" id="GO:0003713">
    <property type="term" value="F:transcription coactivator activity"/>
    <property type="evidence" value="ECO:0000314"/>
    <property type="project" value="TAIR"/>
</dbReference>
<dbReference type="GO" id="GO:0008270">
    <property type="term" value="F:zinc ion binding"/>
    <property type="evidence" value="ECO:0007669"/>
    <property type="project" value="UniProtKB-KW"/>
</dbReference>
<dbReference type="GO" id="GO:0009631">
    <property type="term" value="P:cold acclimation"/>
    <property type="evidence" value="ECO:0000315"/>
    <property type="project" value="TAIR"/>
</dbReference>
<dbReference type="GO" id="GO:0042127">
    <property type="term" value="P:regulation of cell population proliferation"/>
    <property type="evidence" value="ECO:0000315"/>
    <property type="project" value="TAIR"/>
</dbReference>
<dbReference type="GO" id="GO:0006357">
    <property type="term" value="P:regulation of transcription by RNA polymerase II"/>
    <property type="evidence" value="ECO:0007669"/>
    <property type="project" value="InterPro"/>
</dbReference>
<dbReference type="GO" id="GO:0009733">
    <property type="term" value="P:response to auxin"/>
    <property type="evidence" value="ECO:0000315"/>
    <property type="project" value="TAIR"/>
</dbReference>
<dbReference type="GO" id="GO:0009735">
    <property type="term" value="P:response to cytokinin"/>
    <property type="evidence" value="ECO:0000315"/>
    <property type="project" value="TAIR"/>
</dbReference>
<dbReference type="CDD" id="cd00167">
    <property type="entry name" value="SANT"/>
    <property type="match status" value="1"/>
</dbReference>
<dbReference type="CDD" id="cd02335">
    <property type="entry name" value="ZZ_ADA2"/>
    <property type="match status" value="1"/>
</dbReference>
<dbReference type="FunFam" id="3.30.60.90:FF:000013">
    <property type="entry name" value="Transcriptional adapter"/>
    <property type="match status" value="1"/>
</dbReference>
<dbReference type="FunFam" id="1.10.10.10:FF:000087">
    <property type="entry name" value="Transcriptional adapter 2"/>
    <property type="match status" value="1"/>
</dbReference>
<dbReference type="FunFam" id="1.10.10.60:FF:000115">
    <property type="entry name" value="Transcriptional adapter 2"/>
    <property type="match status" value="1"/>
</dbReference>
<dbReference type="Gene3D" id="3.30.60.90">
    <property type="match status" value="1"/>
</dbReference>
<dbReference type="Gene3D" id="1.10.10.60">
    <property type="entry name" value="Homeodomain-like"/>
    <property type="match status" value="1"/>
</dbReference>
<dbReference type="Gene3D" id="1.10.10.10">
    <property type="entry name" value="Winged helix-like DNA-binding domain superfamily/Winged helix DNA-binding domain"/>
    <property type="match status" value="1"/>
</dbReference>
<dbReference type="InterPro" id="IPR041983">
    <property type="entry name" value="ADA2-like_ZZ"/>
</dbReference>
<dbReference type="InterPro" id="IPR016827">
    <property type="entry name" value="Ada2/TADA2"/>
</dbReference>
<dbReference type="InterPro" id="IPR009057">
    <property type="entry name" value="Homeodomain-like_sf"/>
</dbReference>
<dbReference type="InterPro" id="IPR017930">
    <property type="entry name" value="Myb_dom"/>
</dbReference>
<dbReference type="InterPro" id="IPR001005">
    <property type="entry name" value="SANT/Myb"/>
</dbReference>
<dbReference type="InterPro" id="IPR017884">
    <property type="entry name" value="SANT_dom"/>
</dbReference>
<dbReference type="InterPro" id="IPR007526">
    <property type="entry name" value="SWIRM"/>
</dbReference>
<dbReference type="InterPro" id="IPR055141">
    <property type="entry name" value="TADA2A_B-like_dom"/>
</dbReference>
<dbReference type="InterPro" id="IPR036388">
    <property type="entry name" value="WH-like_DNA-bd_sf"/>
</dbReference>
<dbReference type="InterPro" id="IPR000433">
    <property type="entry name" value="Znf_ZZ"/>
</dbReference>
<dbReference type="InterPro" id="IPR043145">
    <property type="entry name" value="Znf_ZZ_sf"/>
</dbReference>
<dbReference type="PANTHER" id="PTHR12374:SF81">
    <property type="entry name" value="TRANSCRIPTIONAL ADAPTER ADA2B"/>
    <property type="match status" value="1"/>
</dbReference>
<dbReference type="PANTHER" id="PTHR12374">
    <property type="entry name" value="TRANSCRIPTIONAL ADAPTOR 2 ADA2 -RELATED"/>
    <property type="match status" value="1"/>
</dbReference>
<dbReference type="Pfam" id="PF00249">
    <property type="entry name" value="Myb_DNA-binding"/>
    <property type="match status" value="1"/>
</dbReference>
<dbReference type="Pfam" id="PF22941">
    <property type="entry name" value="TADA2A-like_3rd"/>
    <property type="match status" value="1"/>
</dbReference>
<dbReference type="Pfam" id="PF25299">
    <property type="entry name" value="ZZ_ADA2"/>
    <property type="match status" value="1"/>
</dbReference>
<dbReference type="PIRSF" id="PIRSF025024">
    <property type="entry name" value="Transcriptional_adaptor_2"/>
    <property type="match status" value="1"/>
</dbReference>
<dbReference type="SMART" id="SM00717">
    <property type="entry name" value="SANT"/>
    <property type="match status" value="1"/>
</dbReference>
<dbReference type="SMART" id="SM00291">
    <property type="entry name" value="ZnF_ZZ"/>
    <property type="match status" value="1"/>
</dbReference>
<dbReference type="SUPFAM" id="SSF46689">
    <property type="entry name" value="Homeodomain-like"/>
    <property type="match status" value="2"/>
</dbReference>
<dbReference type="SUPFAM" id="SSF57850">
    <property type="entry name" value="RING/U-box"/>
    <property type="match status" value="1"/>
</dbReference>
<dbReference type="PROSITE" id="PS51293">
    <property type="entry name" value="SANT"/>
    <property type="match status" value="1"/>
</dbReference>
<dbReference type="PROSITE" id="PS50934">
    <property type="entry name" value="SWIRM"/>
    <property type="match status" value="1"/>
</dbReference>
<dbReference type="PROSITE" id="PS01357">
    <property type="entry name" value="ZF_ZZ_1"/>
    <property type="match status" value="1"/>
</dbReference>
<dbReference type="PROSITE" id="PS50135">
    <property type="entry name" value="ZF_ZZ_2"/>
    <property type="match status" value="1"/>
</dbReference>
<proteinExistence type="evidence at protein level"/>
<protein>
    <recommendedName>
        <fullName>Transcriptional adapter ADA2b</fullName>
        <shortName>AtADA2b</shortName>
    </recommendedName>
    <alternativeName>
        <fullName>Protein PROPORZ 1</fullName>
    </alternativeName>
</protein>
<accession>Q9ATB4</accession>
<accession>O23486</accession>
<accession>Q3EA06</accession>
<accession>Q3EA07</accession>
<reference key="1">
    <citation type="journal article" date="2001" name="Nucleic Acids Res.">
        <title>Transcriptional adaptor and histone acetyltransferase proteins in Arabidopsis and their interactions with CBF1, a transcriptional activator involved in cold-regulated gene expression.</title>
        <authorList>
            <person name="Stockinger E.J."/>
            <person name="Mao Y."/>
            <person name="Regier M.K."/>
            <person name="Triezenberg S.J."/>
            <person name="Thomashow M.F."/>
        </authorList>
    </citation>
    <scope>NUCLEOTIDE SEQUENCE [MRNA] (ISOFORM 1)</scope>
    <scope>IDENTIFICATION</scope>
    <scope>TISSUE SPECIFICITY</scope>
    <scope>INTERACTION WITH GCN5 AND DREB1B/CBF1</scope>
</reference>
<reference key="2">
    <citation type="journal article" date="1998" name="Nature">
        <title>Analysis of 1.9 Mb of contiguous sequence from chromosome 4 of Arabidopsis thaliana.</title>
        <authorList>
            <person name="Bevan M."/>
            <person name="Bancroft I."/>
            <person name="Bent E."/>
            <person name="Love K."/>
            <person name="Goodman H.M."/>
            <person name="Dean C."/>
            <person name="Bergkamp R."/>
            <person name="Dirkse W."/>
            <person name="van Staveren M."/>
            <person name="Stiekema W."/>
            <person name="Drost L."/>
            <person name="Ridley P."/>
            <person name="Hudson S.-A."/>
            <person name="Patel K."/>
            <person name="Murphy G."/>
            <person name="Piffanelli P."/>
            <person name="Wedler H."/>
            <person name="Wedler E."/>
            <person name="Wambutt R."/>
            <person name="Weitzenegger T."/>
            <person name="Pohl T."/>
            <person name="Terryn N."/>
            <person name="Gielen J."/>
            <person name="Villarroel R."/>
            <person name="De Clercq R."/>
            <person name="van Montagu M."/>
            <person name="Lecharny A."/>
            <person name="Aubourg S."/>
            <person name="Gy I."/>
            <person name="Kreis M."/>
            <person name="Lao N."/>
            <person name="Kavanagh T."/>
            <person name="Hempel S."/>
            <person name="Kotter P."/>
            <person name="Entian K.-D."/>
            <person name="Rieger M."/>
            <person name="Schaefer M."/>
            <person name="Funk B."/>
            <person name="Mueller-Auer S."/>
            <person name="Silvey M."/>
            <person name="James R."/>
            <person name="Monfort A."/>
            <person name="Pons A."/>
            <person name="Puigdomenech P."/>
            <person name="Douka A."/>
            <person name="Voukelatou E."/>
            <person name="Milioni D."/>
            <person name="Hatzopoulos P."/>
            <person name="Piravandi E."/>
            <person name="Obermaier B."/>
            <person name="Hilbert H."/>
            <person name="Duesterhoeft A."/>
            <person name="Moores T."/>
            <person name="Jones J.D.G."/>
            <person name="Eneva T."/>
            <person name="Palme K."/>
            <person name="Benes V."/>
            <person name="Rechmann S."/>
            <person name="Ansorge W."/>
            <person name="Cooke R."/>
            <person name="Berger C."/>
            <person name="Delseny M."/>
            <person name="Voet M."/>
            <person name="Volckaert G."/>
            <person name="Mewes H.-W."/>
            <person name="Klosterman S."/>
            <person name="Schueller C."/>
            <person name="Chalwatzis N."/>
        </authorList>
    </citation>
    <scope>NUCLEOTIDE SEQUENCE [LARGE SCALE GENOMIC DNA]</scope>
    <source>
        <strain>cv. Columbia</strain>
    </source>
</reference>
<reference key="3">
    <citation type="journal article" date="1999" name="Nature">
        <title>Sequence and analysis of chromosome 4 of the plant Arabidopsis thaliana.</title>
        <authorList>
            <person name="Mayer K.F.X."/>
            <person name="Schueller C."/>
            <person name="Wambutt R."/>
            <person name="Murphy G."/>
            <person name="Volckaert G."/>
            <person name="Pohl T."/>
            <person name="Duesterhoeft A."/>
            <person name="Stiekema W."/>
            <person name="Entian K.-D."/>
            <person name="Terryn N."/>
            <person name="Harris B."/>
            <person name="Ansorge W."/>
            <person name="Brandt P."/>
            <person name="Grivell L.A."/>
            <person name="Rieger M."/>
            <person name="Weichselgartner M."/>
            <person name="de Simone V."/>
            <person name="Obermaier B."/>
            <person name="Mache R."/>
            <person name="Mueller M."/>
            <person name="Kreis M."/>
            <person name="Delseny M."/>
            <person name="Puigdomenech P."/>
            <person name="Watson M."/>
            <person name="Schmidtheini T."/>
            <person name="Reichert B."/>
            <person name="Portetelle D."/>
            <person name="Perez-Alonso M."/>
            <person name="Boutry M."/>
            <person name="Bancroft I."/>
            <person name="Vos P."/>
            <person name="Hoheisel J."/>
            <person name="Zimmermann W."/>
            <person name="Wedler H."/>
            <person name="Ridley P."/>
            <person name="Langham S.-A."/>
            <person name="McCullagh B."/>
            <person name="Bilham L."/>
            <person name="Robben J."/>
            <person name="van der Schueren J."/>
            <person name="Grymonprez B."/>
            <person name="Chuang Y.-J."/>
            <person name="Vandenbussche F."/>
            <person name="Braeken M."/>
            <person name="Weltjens I."/>
            <person name="Voet M."/>
            <person name="Bastiaens I."/>
            <person name="Aert R."/>
            <person name="Defoor E."/>
            <person name="Weitzenegger T."/>
            <person name="Bothe G."/>
            <person name="Ramsperger U."/>
            <person name="Hilbert H."/>
            <person name="Braun M."/>
            <person name="Holzer E."/>
            <person name="Brandt A."/>
            <person name="Peters S."/>
            <person name="van Staveren M."/>
            <person name="Dirkse W."/>
            <person name="Mooijman P."/>
            <person name="Klein Lankhorst R."/>
            <person name="Rose M."/>
            <person name="Hauf J."/>
            <person name="Koetter P."/>
            <person name="Berneiser S."/>
            <person name="Hempel S."/>
            <person name="Feldpausch M."/>
            <person name="Lamberth S."/>
            <person name="Van den Daele H."/>
            <person name="De Keyser A."/>
            <person name="Buysshaert C."/>
            <person name="Gielen J."/>
            <person name="Villarroel R."/>
            <person name="De Clercq R."/>
            <person name="van Montagu M."/>
            <person name="Rogers J."/>
            <person name="Cronin A."/>
            <person name="Quail M.A."/>
            <person name="Bray-Allen S."/>
            <person name="Clark L."/>
            <person name="Doggett J."/>
            <person name="Hall S."/>
            <person name="Kay M."/>
            <person name="Lennard N."/>
            <person name="McLay K."/>
            <person name="Mayes R."/>
            <person name="Pettett A."/>
            <person name="Rajandream M.A."/>
            <person name="Lyne M."/>
            <person name="Benes V."/>
            <person name="Rechmann S."/>
            <person name="Borkova D."/>
            <person name="Bloecker H."/>
            <person name="Scharfe M."/>
            <person name="Grimm M."/>
            <person name="Loehnert T.-H."/>
            <person name="Dose S."/>
            <person name="de Haan M."/>
            <person name="Maarse A.C."/>
            <person name="Schaefer M."/>
            <person name="Mueller-Auer S."/>
            <person name="Gabel C."/>
            <person name="Fuchs M."/>
            <person name="Fartmann B."/>
            <person name="Granderath K."/>
            <person name="Dauner D."/>
            <person name="Herzl A."/>
            <person name="Neumann S."/>
            <person name="Argiriou A."/>
            <person name="Vitale D."/>
            <person name="Liguori R."/>
            <person name="Piravandi E."/>
            <person name="Massenet O."/>
            <person name="Quigley F."/>
            <person name="Clabauld G."/>
            <person name="Muendlein A."/>
            <person name="Felber R."/>
            <person name="Schnabl S."/>
            <person name="Hiller R."/>
            <person name="Schmidt W."/>
            <person name="Lecharny A."/>
            <person name="Aubourg S."/>
            <person name="Chefdor F."/>
            <person name="Cooke R."/>
            <person name="Berger C."/>
            <person name="Monfort A."/>
            <person name="Casacuberta E."/>
            <person name="Gibbons T."/>
            <person name="Weber N."/>
            <person name="Vandenbol M."/>
            <person name="Bargues M."/>
            <person name="Terol J."/>
            <person name="Torres A."/>
            <person name="Perez-Perez A."/>
            <person name="Purnelle B."/>
            <person name="Bent E."/>
            <person name="Johnson S."/>
            <person name="Tacon D."/>
            <person name="Jesse T."/>
            <person name="Heijnen L."/>
            <person name="Schwarz S."/>
            <person name="Scholler P."/>
            <person name="Heber S."/>
            <person name="Francs P."/>
            <person name="Bielke C."/>
            <person name="Frishman D."/>
            <person name="Haase D."/>
            <person name="Lemcke K."/>
            <person name="Mewes H.-W."/>
            <person name="Stocker S."/>
            <person name="Zaccaria P."/>
            <person name="Bevan M."/>
            <person name="Wilson R.K."/>
            <person name="de la Bastide M."/>
            <person name="Habermann K."/>
            <person name="Parnell L."/>
            <person name="Dedhia N."/>
            <person name="Gnoj L."/>
            <person name="Schutz K."/>
            <person name="Huang E."/>
            <person name="Spiegel L."/>
            <person name="Sekhon M."/>
            <person name="Murray J."/>
            <person name="Sheet P."/>
            <person name="Cordes M."/>
            <person name="Abu-Threideh J."/>
            <person name="Stoneking T."/>
            <person name="Kalicki J."/>
            <person name="Graves T."/>
            <person name="Harmon G."/>
            <person name="Edwards J."/>
            <person name="Latreille P."/>
            <person name="Courtney L."/>
            <person name="Cloud J."/>
            <person name="Abbott A."/>
            <person name="Scott K."/>
            <person name="Johnson D."/>
            <person name="Minx P."/>
            <person name="Bentley D."/>
            <person name="Fulton B."/>
            <person name="Miller N."/>
            <person name="Greco T."/>
            <person name="Kemp K."/>
            <person name="Kramer J."/>
            <person name="Fulton L."/>
            <person name="Mardis E."/>
            <person name="Dante M."/>
            <person name="Pepin K."/>
            <person name="Hillier L.W."/>
            <person name="Nelson J."/>
            <person name="Spieth J."/>
            <person name="Ryan E."/>
            <person name="Andrews S."/>
            <person name="Geisel C."/>
            <person name="Layman D."/>
            <person name="Du H."/>
            <person name="Ali J."/>
            <person name="Berghoff A."/>
            <person name="Jones K."/>
            <person name="Drone K."/>
            <person name="Cotton M."/>
            <person name="Joshu C."/>
            <person name="Antonoiu B."/>
            <person name="Zidanic M."/>
            <person name="Strong C."/>
            <person name="Sun H."/>
            <person name="Lamar B."/>
            <person name="Yordan C."/>
            <person name="Ma P."/>
            <person name="Zhong J."/>
            <person name="Preston R."/>
            <person name="Vil D."/>
            <person name="Shekher M."/>
            <person name="Matero A."/>
            <person name="Shah R."/>
            <person name="Swaby I.K."/>
            <person name="O'Shaughnessy A."/>
            <person name="Rodriguez M."/>
            <person name="Hoffman J."/>
            <person name="Till S."/>
            <person name="Granat S."/>
            <person name="Shohdy N."/>
            <person name="Hasegawa A."/>
            <person name="Hameed A."/>
            <person name="Lodhi M."/>
            <person name="Johnson A."/>
            <person name="Chen E."/>
            <person name="Marra M.A."/>
            <person name="Martienssen R."/>
            <person name="McCombie W.R."/>
        </authorList>
    </citation>
    <scope>NUCLEOTIDE SEQUENCE [LARGE SCALE GENOMIC DNA]</scope>
    <source>
        <strain>cv. Columbia</strain>
    </source>
</reference>
<reference key="4">
    <citation type="journal article" date="2017" name="Plant J.">
        <title>Araport11: a complete reannotation of the Arabidopsis thaliana reference genome.</title>
        <authorList>
            <person name="Cheng C.Y."/>
            <person name="Krishnakumar V."/>
            <person name="Chan A.P."/>
            <person name="Thibaud-Nissen F."/>
            <person name="Schobel S."/>
            <person name="Town C.D."/>
        </authorList>
    </citation>
    <scope>GENOME REANNOTATION</scope>
    <source>
        <strain>cv. Columbia</strain>
    </source>
</reference>
<reference key="5">
    <citation type="journal article" date="2003" name="Science">
        <title>Empirical analysis of transcriptional activity in the Arabidopsis genome.</title>
        <authorList>
            <person name="Yamada K."/>
            <person name="Lim J."/>
            <person name="Dale J.M."/>
            <person name="Chen H."/>
            <person name="Shinn P."/>
            <person name="Palm C.J."/>
            <person name="Southwick A.M."/>
            <person name="Wu H.C."/>
            <person name="Kim C.J."/>
            <person name="Nguyen M."/>
            <person name="Pham P.K."/>
            <person name="Cheuk R.F."/>
            <person name="Karlin-Newmann G."/>
            <person name="Liu S.X."/>
            <person name="Lam B."/>
            <person name="Sakano H."/>
            <person name="Wu T."/>
            <person name="Yu G."/>
            <person name="Miranda M."/>
            <person name="Quach H.L."/>
            <person name="Tripp M."/>
            <person name="Chang C.H."/>
            <person name="Lee J.M."/>
            <person name="Toriumi M.J."/>
            <person name="Chan M.M."/>
            <person name="Tang C.C."/>
            <person name="Onodera C.S."/>
            <person name="Deng J.M."/>
            <person name="Akiyama K."/>
            <person name="Ansari Y."/>
            <person name="Arakawa T."/>
            <person name="Banh J."/>
            <person name="Banno F."/>
            <person name="Bowser L."/>
            <person name="Brooks S.Y."/>
            <person name="Carninci P."/>
            <person name="Chao Q."/>
            <person name="Choy N."/>
            <person name="Enju A."/>
            <person name="Goldsmith A.D."/>
            <person name="Gurjal M."/>
            <person name="Hansen N.F."/>
            <person name="Hayashizaki Y."/>
            <person name="Johnson-Hopson C."/>
            <person name="Hsuan V.W."/>
            <person name="Iida K."/>
            <person name="Karnes M."/>
            <person name="Khan S."/>
            <person name="Koesema E."/>
            <person name="Ishida J."/>
            <person name="Jiang P.X."/>
            <person name="Jones T."/>
            <person name="Kawai J."/>
            <person name="Kamiya A."/>
            <person name="Meyers C."/>
            <person name="Nakajima M."/>
            <person name="Narusaka M."/>
            <person name="Seki M."/>
            <person name="Sakurai T."/>
            <person name="Satou M."/>
            <person name="Tamse R."/>
            <person name="Vaysberg M."/>
            <person name="Wallender E.K."/>
            <person name="Wong C."/>
            <person name="Yamamura Y."/>
            <person name="Yuan S."/>
            <person name="Shinozaki K."/>
            <person name="Davis R.W."/>
            <person name="Theologis A."/>
            <person name="Ecker J.R."/>
        </authorList>
    </citation>
    <scope>NUCLEOTIDE SEQUENCE [LARGE SCALE MRNA] (ISOFORM 1)</scope>
    <source>
        <strain>cv. Columbia</strain>
    </source>
</reference>
<reference key="6">
    <citation type="journal article" date="2004" name="Genome Res.">
        <title>Whole genome sequence comparisons and 'full-length' cDNA sequences: a combined approach to evaluate and improve Arabidopsis genome annotation.</title>
        <authorList>
            <person name="Castelli V."/>
            <person name="Aury J.-M."/>
            <person name="Jaillon O."/>
            <person name="Wincker P."/>
            <person name="Clepet C."/>
            <person name="Menard M."/>
            <person name="Cruaud C."/>
            <person name="Quetier F."/>
            <person name="Scarpelli C."/>
            <person name="Schaechter V."/>
            <person name="Temple G."/>
            <person name="Caboche M."/>
            <person name="Weissenbach J."/>
            <person name="Salanoubat M."/>
        </authorList>
    </citation>
    <scope>NUCLEOTIDE SEQUENCE [LARGE SCALE MRNA] (ISOFORMS 2 AND 3)</scope>
    <source>
        <strain>cv. Columbia</strain>
    </source>
</reference>
<reference key="7">
    <citation type="journal article" date="2003" name="Curr. Biol.">
        <title>PROPORZ1, a putative Arabidopsis transcriptional adaptor protein, mediates auxin and cytokinin signals in the control of cell proliferation.</title>
        <authorList>
            <person name="Sieberer T."/>
            <person name="Hauser M.-T."/>
            <person name="Seifert G.J."/>
            <person name="Luschnig C."/>
        </authorList>
    </citation>
    <scope>FUNCTION</scope>
    <scope>DISRUPTION PHENOTYPE</scope>
    <scope>TISSUE SPECIFICITY</scope>
    <scope>SUBCELLULAR LOCATION</scope>
    <scope>IDENTIFICATION</scope>
</reference>
<reference key="8">
    <citation type="journal article" date="2003" name="Plant Cell">
        <title>Disruption mutations of ADA2b and GCN5 transcriptional adaptor genes dramatically affect Arabidopsis growth, development, and gene expression.</title>
        <authorList>
            <person name="Vlachonasios K.E."/>
            <person name="Thomashow M.F."/>
            <person name="Triezenberg S.J."/>
        </authorList>
    </citation>
    <scope>FUNCTION</scope>
    <scope>DISRUPTION PHENOTYPE</scope>
</reference>
<reference key="9">
    <citation type="journal article" date="2006" name="Biochim. Biophys. Acta">
        <title>Physical and functional interactions of Arabidopsis ADA2 transcriptional coactivator proteins with the acetyltransferase GCN5 and with the cold-induced transcription factor CBF1.</title>
        <authorList>
            <person name="Mao Y."/>
            <person name="Pavangadkar K.A."/>
            <person name="Thomashow M.F."/>
            <person name="Triezenberg S.J."/>
        </authorList>
    </citation>
    <scope>INTERACTION WITH GCN5 AND DREB1B/CBF1</scope>
    <scope>ACETYLATION AT LYS-216</scope>
    <scope>IDENTIFICATION BY MASS SPECTROMETRY</scope>
    <scope>MUTAGENESIS OF LYS-216</scope>
</reference>
<reference key="10">
    <citation type="journal article" date="2011" name="Planta">
        <title>Arabidopsis thaliana transcriptional co-activators ADA2b and SGF29a are implicated in salt stress responses.</title>
        <authorList>
            <person name="Kaldis A."/>
            <person name="Tsementzi D."/>
            <person name="Tanriverdi O."/>
            <person name="Vlachonasios K.E."/>
        </authorList>
    </citation>
    <scope>FUNCTION</scope>
</reference>
<reference key="11">
    <citation type="journal article" date="2014" name="Nat. Commun.">
        <title>The Arabidopsis transcription factor bZIP11 activates auxin-mediated transcription by recruiting the histone acetylation machinery.</title>
        <authorList>
            <person name="Weiste C."/>
            <person name="Droege-Laser W."/>
        </authorList>
    </citation>
    <scope>INTERACTION WITH BZIP11</scope>
</reference>
<comment type="function">
    <text evidence="1 7 8 10">Required for the function of some acidic activation domains, which activate transcription from a distant site. The exact mechanism of action is not yet known (By similarity). ADA2 stimulates the acetyltransferase activity of GCN5 on free histones or nucleosomes, probably by opening up the promoter region. Mediates auxin and cytokinin signals in the control of cell proliferation and might be involved in repression of a freezing tolerance pathway at warm temperature (PubMed:12615937, PubMed:12747832). Involved in the positive regulation of salt-induced gene expression by maintaining locus-specific acetylation of histones H4 and H3 (PubMed:21193996).</text>
</comment>
<comment type="subunit">
    <text evidence="6 9 11">Interacts in vitro with the HAT domain of GCN5 and with the DNA-binding domain of the transcriptional activator DREB1B/CBF1 (PubMed:11266554, PubMed:16603259). Interacts with BZIP11 (PubMed:24861440).</text>
</comment>
<comment type="interaction">
    <interactant intactId="EBI-979237">
        <id>Q9ATB4</id>
    </interactant>
    <interactant intactId="EBI-2363348">
        <id>Q9FLI3</id>
        <label>AHG1</label>
    </interactant>
    <organismsDiffer>false</organismsDiffer>
    <experiments>3</experiments>
</comment>
<comment type="interaction">
    <interactant intactId="EBI-979237">
        <id>Q9ATB4</id>
    </interactant>
    <interactant intactId="EBI-25510857">
        <id>A0A178VY90</id>
        <label>At2g32840</label>
    </interactant>
    <organismsDiffer>false</organismsDiffer>
    <experiments>4</experiments>
</comment>
<comment type="interaction">
    <interactant intactId="EBI-979237">
        <id>Q9ATB4</id>
    </interactant>
    <interactant intactId="EBI-4436601">
        <id>Q945P2</id>
        <label>At5g49210</label>
    </interactant>
    <organismsDiffer>false</organismsDiffer>
    <experiments>3</experiments>
</comment>
<comment type="interaction">
    <interactant intactId="EBI-979237">
        <id>Q9ATB4</id>
    </interactant>
    <interactant intactId="EBI-979271">
        <id>Q9AR19</id>
        <label>HAG1</label>
    </interactant>
    <organismsDiffer>false</organismsDiffer>
    <experiments>5</experiments>
</comment>
<comment type="interaction">
    <interactant intactId="EBI-979237">
        <id>Q9ATB4</id>
    </interactant>
    <interactant intactId="EBI-4465639">
        <id>Q84JZ6</id>
        <label>MORF3</label>
    </interactant>
    <organismsDiffer>false</organismsDiffer>
    <experiments>3</experiments>
</comment>
<comment type="interaction">
    <interactant intactId="EBI-979237">
        <id>Q9ATB4</id>
    </interactant>
    <interactant intactId="EBI-25520098">
        <id>Q9LHI5</id>
    </interactant>
    <organismsDiffer>false</organismsDiffer>
    <experiments>3</experiments>
</comment>
<comment type="subcellular location">
    <subcellularLocation>
        <location evidence="4 8">Nucleus</location>
    </subcellularLocation>
</comment>
<comment type="alternative products">
    <event type="alternative splicing"/>
    <isoform>
        <id>Q9ATB4-1</id>
        <name>1</name>
        <sequence type="displayed"/>
    </isoform>
    <isoform>
        <id>Q9ATB4-2</id>
        <name>2</name>
        <sequence type="described" ref="VSP_022096"/>
    </isoform>
    <isoform>
        <id>Q9ATB4-3</id>
        <name>3</name>
        <sequence type="described" ref="VSP_022095"/>
    </isoform>
</comment>
<comment type="tissue specificity">
    <text evidence="6 8">Expressed in roots, leaves, stems, flowers and siliques, with the strongest activity in the meristematic zones.</text>
</comment>
<comment type="domain">
    <text>The middle domain of ADA2b is sufficient for interaction with the HAT catalytic domain of GCN5.</text>
</comment>
<comment type="PTM">
    <text evidence="9">Acetylated in vitro by GCN5, but acetylation is not essential for biological activity.</text>
</comment>
<comment type="disruption phenotype">
    <text evidence="7 8">Plants have pleiotropic effects on plant growth and development, including dwarf size, aberrant root development, and short petals and stamens in flowers. ADA2a cannot rescue any of the mutant phenotypes.</text>
</comment>
<comment type="sequence caution" evidence="13">
    <conflict type="erroneous gene model prediction">
        <sequence resource="EMBL-CDS" id="CAB10418"/>
    </conflict>
</comment>
<comment type="sequence caution" evidence="13">
    <conflict type="erroneous gene model prediction">
        <sequence resource="EMBL-CDS" id="CAB78684"/>
    </conflict>
</comment>
<evidence type="ECO:0000250" key="1"/>
<evidence type="ECO:0000255" key="2">
    <source>
        <dbReference type="PROSITE-ProRule" id="PRU00228"/>
    </source>
</evidence>
<evidence type="ECO:0000255" key="3">
    <source>
        <dbReference type="PROSITE-ProRule" id="PRU00247"/>
    </source>
</evidence>
<evidence type="ECO:0000255" key="4">
    <source>
        <dbReference type="PROSITE-ProRule" id="PRU00624"/>
    </source>
</evidence>
<evidence type="ECO:0000256" key="5">
    <source>
        <dbReference type="SAM" id="MobiDB-lite"/>
    </source>
</evidence>
<evidence type="ECO:0000269" key="6">
    <source>
    </source>
</evidence>
<evidence type="ECO:0000269" key="7">
    <source>
    </source>
</evidence>
<evidence type="ECO:0000269" key="8">
    <source>
    </source>
</evidence>
<evidence type="ECO:0000269" key="9">
    <source>
    </source>
</evidence>
<evidence type="ECO:0000269" key="10">
    <source>
    </source>
</evidence>
<evidence type="ECO:0000269" key="11">
    <source>
    </source>
</evidence>
<evidence type="ECO:0000303" key="12">
    <source>
    </source>
</evidence>
<evidence type="ECO:0000305" key="13"/>
<keyword id="KW-0007">Acetylation</keyword>
<keyword id="KW-0025">Alternative splicing</keyword>
<keyword id="KW-0238">DNA-binding</keyword>
<keyword id="KW-0479">Metal-binding</keyword>
<keyword id="KW-0539">Nucleus</keyword>
<keyword id="KW-1185">Reference proteome</keyword>
<keyword id="KW-0346">Stress response</keyword>
<keyword id="KW-0804">Transcription</keyword>
<keyword id="KW-0805">Transcription regulation</keyword>
<keyword id="KW-0862">Zinc</keyword>
<keyword id="KW-0863">Zinc-finger</keyword>
<name>TAD2B_ARATH</name>
<feature type="chain" id="PRO_0000269751" description="Transcriptional adapter ADA2b">
    <location>
        <begin position="1"/>
        <end position="487"/>
    </location>
</feature>
<feature type="domain" description="SANT" evidence="4">
    <location>
        <begin position="100"/>
        <end position="152"/>
    </location>
</feature>
<feature type="domain" description="SWIRM" evidence="3">
    <location>
        <begin position="401"/>
        <end position="487"/>
    </location>
</feature>
<feature type="zinc finger region" description="ZZ-type" evidence="2">
    <location>
        <begin position="42"/>
        <end position="98"/>
    </location>
</feature>
<feature type="region of interest" description="Disordered" evidence="5">
    <location>
        <begin position="1"/>
        <end position="25"/>
    </location>
</feature>
<feature type="region of interest" description="Disordered" evidence="5">
    <location>
        <begin position="368"/>
        <end position="388"/>
    </location>
</feature>
<feature type="compositionally biased region" description="Polar residues" evidence="5">
    <location>
        <begin position="1"/>
        <end position="13"/>
    </location>
</feature>
<feature type="compositionally biased region" description="Basic and acidic residues" evidence="5">
    <location>
        <begin position="368"/>
        <end position="383"/>
    </location>
</feature>
<feature type="binding site" evidence="2">
    <location>
        <position position="47"/>
    </location>
    <ligand>
        <name>Zn(2+)</name>
        <dbReference type="ChEBI" id="CHEBI:29105"/>
        <label>1</label>
    </ligand>
</feature>
<feature type="binding site" evidence="2">
    <location>
        <position position="50"/>
    </location>
    <ligand>
        <name>Zn(2+)</name>
        <dbReference type="ChEBI" id="CHEBI:29105"/>
        <label>1</label>
    </ligand>
</feature>
<feature type="binding site" evidence="2">
    <location>
        <position position="62"/>
    </location>
    <ligand>
        <name>Zn(2+)</name>
        <dbReference type="ChEBI" id="CHEBI:29105"/>
        <label>2</label>
    </ligand>
</feature>
<feature type="binding site" evidence="2">
    <location>
        <position position="65"/>
    </location>
    <ligand>
        <name>Zn(2+)</name>
        <dbReference type="ChEBI" id="CHEBI:29105"/>
        <label>2</label>
    </ligand>
</feature>
<feature type="binding site" evidence="2">
    <location>
        <position position="71"/>
    </location>
    <ligand>
        <name>Zn(2+)</name>
        <dbReference type="ChEBI" id="CHEBI:29105"/>
        <label>1</label>
    </ligand>
</feature>
<feature type="binding site" evidence="2">
    <location>
        <position position="74"/>
    </location>
    <ligand>
        <name>Zn(2+)</name>
        <dbReference type="ChEBI" id="CHEBI:29105"/>
        <label>1</label>
    </ligand>
</feature>
<feature type="binding site" evidence="2">
    <location>
        <position position="84"/>
    </location>
    <ligand>
        <name>Zn(2+)</name>
        <dbReference type="ChEBI" id="CHEBI:29105"/>
        <label>2</label>
    </ligand>
</feature>
<feature type="binding site" evidence="2">
    <location>
        <position position="88"/>
    </location>
    <ligand>
        <name>Zn(2+)</name>
        <dbReference type="ChEBI" id="CHEBI:29105"/>
        <label>2</label>
    </ligand>
</feature>
<feature type="modified residue" description="N6-acetyllysine; by GCN5" evidence="9">
    <location>
        <position position="216"/>
    </location>
</feature>
<feature type="splice variant" id="VSP_022095" description="In isoform 3." evidence="12">
    <location>
        <position position="183"/>
    </location>
</feature>
<feature type="splice variant" id="VSP_022096" description="In isoform 2." evidence="12">
    <location>
        <begin position="206"/>
        <end position="209"/>
    </location>
</feature>
<feature type="mutagenesis site" description="No phenotypic effect." evidence="9">
    <original>K</original>
    <variation>A</variation>
    <variation>R</variation>
    <location>
        <position position="216"/>
    </location>
</feature>